<proteinExistence type="inferred from homology"/>
<keyword id="KW-0028">Amino-acid biosynthesis</keyword>
<keyword id="KW-0963">Cytoplasm</keyword>
<keyword id="KW-0220">Diaminopimelate biosynthesis</keyword>
<keyword id="KW-0456">Lyase</keyword>
<keyword id="KW-0457">Lysine biosynthesis</keyword>
<keyword id="KW-1185">Reference proteome</keyword>
<keyword id="KW-0704">Schiff base</keyword>
<feature type="chain" id="PRO_1000134854" description="4-hydroxy-tetrahydrodipicolinate synthase">
    <location>
        <begin position="1"/>
        <end position="302"/>
    </location>
</feature>
<feature type="active site" description="Proton donor/acceptor" evidence="1">
    <location>
        <position position="135"/>
    </location>
</feature>
<feature type="active site" description="Schiff-base intermediate with substrate" evidence="1">
    <location>
        <position position="164"/>
    </location>
</feature>
<feature type="binding site" evidence="1">
    <location>
        <position position="46"/>
    </location>
    <ligand>
        <name>pyruvate</name>
        <dbReference type="ChEBI" id="CHEBI:15361"/>
    </ligand>
</feature>
<feature type="binding site" evidence="1">
    <location>
        <position position="206"/>
    </location>
    <ligand>
        <name>pyruvate</name>
        <dbReference type="ChEBI" id="CHEBI:15361"/>
    </ligand>
</feature>
<feature type="site" description="Part of a proton relay during catalysis" evidence="1">
    <location>
        <position position="45"/>
    </location>
</feature>
<feature type="site" description="Part of a proton relay during catalysis" evidence="1">
    <location>
        <position position="109"/>
    </location>
</feature>
<sequence length="302" mass="32754">MDLSGCGTALITPFRADESIDEPALRALVDWQIASGIDWLVACGTTAETPTLTHDEWLRVIRIIAEQAAGRVPVWAGCTHNATRQAVENARQAAQIPGVTAILVANPYYNKPTQQGLYEHFLAVARAVELPVVLYNIPSRTGCNLEPETVLRLVGAAPNIAAIKESSSNLPQIGELLTRAPESFRVYSGDDNMALGTIALGGAGLVSVASNEIPREMAEMVRAAVQNDWALARQLHRKYFPLLQANFLETSPGPVKAVLAMMGRIEERYRLPMTPVSSATRARLERLAGELGLLVETPVPQR</sequence>
<evidence type="ECO:0000255" key="1">
    <source>
        <dbReference type="HAMAP-Rule" id="MF_00418"/>
    </source>
</evidence>
<evidence type="ECO:0000305" key="2"/>
<protein>
    <recommendedName>
        <fullName evidence="1">4-hydroxy-tetrahydrodipicolinate synthase</fullName>
        <shortName evidence="1">HTPA synthase</shortName>
        <ecNumber evidence="1">4.3.3.7</ecNumber>
    </recommendedName>
</protein>
<name>DAPA_ACIC5</name>
<gene>
    <name evidence="1" type="primary">dapA</name>
    <name type="ordered locus">ACP_1467</name>
</gene>
<reference key="1">
    <citation type="journal article" date="2009" name="Appl. Environ. Microbiol.">
        <title>Three genomes from the phylum Acidobacteria provide insight into the lifestyles of these microorganisms in soils.</title>
        <authorList>
            <person name="Ward N.L."/>
            <person name="Challacombe J.F."/>
            <person name="Janssen P.H."/>
            <person name="Henrissat B."/>
            <person name="Coutinho P.M."/>
            <person name="Wu M."/>
            <person name="Xie G."/>
            <person name="Haft D.H."/>
            <person name="Sait M."/>
            <person name="Badger J."/>
            <person name="Barabote R.D."/>
            <person name="Bradley B."/>
            <person name="Brettin T.S."/>
            <person name="Brinkac L.M."/>
            <person name="Bruce D."/>
            <person name="Creasy T."/>
            <person name="Daugherty S.C."/>
            <person name="Davidsen T.M."/>
            <person name="DeBoy R.T."/>
            <person name="Detter J.C."/>
            <person name="Dodson R.J."/>
            <person name="Durkin A.S."/>
            <person name="Ganapathy A."/>
            <person name="Gwinn-Giglio M."/>
            <person name="Han C.S."/>
            <person name="Khouri H."/>
            <person name="Kiss H."/>
            <person name="Kothari S.P."/>
            <person name="Madupu R."/>
            <person name="Nelson K.E."/>
            <person name="Nelson W.C."/>
            <person name="Paulsen I."/>
            <person name="Penn K."/>
            <person name="Ren Q."/>
            <person name="Rosovitz M.J."/>
            <person name="Selengut J.D."/>
            <person name="Shrivastava S."/>
            <person name="Sullivan S.A."/>
            <person name="Tapia R."/>
            <person name="Thompson L.S."/>
            <person name="Watkins K.L."/>
            <person name="Yang Q."/>
            <person name="Yu C."/>
            <person name="Zafar N."/>
            <person name="Zhou L."/>
            <person name="Kuske C.R."/>
        </authorList>
    </citation>
    <scope>NUCLEOTIDE SEQUENCE [LARGE SCALE GENOMIC DNA]</scope>
    <source>
        <strain>ATCC 51196 / DSM 11244 / BCRC 80197 / JCM 7670 / NBRC 15755 / NCIMB 13165 / 161</strain>
    </source>
</reference>
<accession>C1F658</accession>
<organism>
    <name type="scientific">Acidobacterium capsulatum (strain ATCC 51196 / DSM 11244 / BCRC 80197 / JCM 7670 / NBRC 15755 / NCIMB 13165 / 161)</name>
    <dbReference type="NCBI Taxonomy" id="240015"/>
    <lineage>
        <taxon>Bacteria</taxon>
        <taxon>Pseudomonadati</taxon>
        <taxon>Acidobacteriota</taxon>
        <taxon>Terriglobia</taxon>
        <taxon>Terriglobales</taxon>
        <taxon>Acidobacteriaceae</taxon>
        <taxon>Acidobacterium</taxon>
    </lineage>
</organism>
<dbReference type="EC" id="4.3.3.7" evidence="1"/>
<dbReference type="EMBL" id="CP001472">
    <property type="protein sequence ID" value="ACO34374.1"/>
    <property type="molecule type" value="Genomic_DNA"/>
</dbReference>
<dbReference type="RefSeq" id="WP_015896600.1">
    <property type="nucleotide sequence ID" value="NC_012483.1"/>
</dbReference>
<dbReference type="SMR" id="C1F658"/>
<dbReference type="FunCoup" id="C1F658">
    <property type="interactions" value="495"/>
</dbReference>
<dbReference type="STRING" id="240015.ACP_1467"/>
<dbReference type="KEGG" id="aca:ACP_1467"/>
<dbReference type="eggNOG" id="COG0329">
    <property type="taxonomic scope" value="Bacteria"/>
</dbReference>
<dbReference type="HOGENOM" id="CLU_049343_7_1_0"/>
<dbReference type="InParanoid" id="C1F658"/>
<dbReference type="OrthoDB" id="9782828at2"/>
<dbReference type="UniPathway" id="UPA00034">
    <property type="reaction ID" value="UER00017"/>
</dbReference>
<dbReference type="Proteomes" id="UP000002207">
    <property type="component" value="Chromosome"/>
</dbReference>
<dbReference type="GO" id="GO:0005829">
    <property type="term" value="C:cytosol"/>
    <property type="evidence" value="ECO:0007669"/>
    <property type="project" value="TreeGrafter"/>
</dbReference>
<dbReference type="GO" id="GO:0008840">
    <property type="term" value="F:4-hydroxy-tetrahydrodipicolinate synthase activity"/>
    <property type="evidence" value="ECO:0007669"/>
    <property type="project" value="UniProtKB-UniRule"/>
</dbReference>
<dbReference type="GO" id="GO:0019877">
    <property type="term" value="P:diaminopimelate biosynthetic process"/>
    <property type="evidence" value="ECO:0007669"/>
    <property type="project" value="UniProtKB-UniRule"/>
</dbReference>
<dbReference type="GO" id="GO:0009089">
    <property type="term" value="P:lysine biosynthetic process via diaminopimelate"/>
    <property type="evidence" value="ECO:0007669"/>
    <property type="project" value="UniProtKB-UniRule"/>
</dbReference>
<dbReference type="CDD" id="cd00950">
    <property type="entry name" value="DHDPS"/>
    <property type="match status" value="1"/>
</dbReference>
<dbReference type="Gene3D" id="3.20.20.70">
    <property type="entry name" value="Aldolase class I"/>
    <property type="match status" value="1"/>
</dbReference>
<dbReference type="HAMAP" id="MF_00418">
    <property type="entry name" value="DapA"/>
    <property type="match status" value="1"/>
</dbReference>
<dbReference type="InterPro" id="IPR013785">
    <property type="entry name" value="Aldolase_TIM"/>
</dbReference>
<dbReference type="InterPro" id="IPR005263">
    <property type="entry name" value="DapA"/>
</dbReference>
<dbReference type="InterPro" id="IPR002220">
    <property type="entry name" value="DapA-like"/>
</dbReference>
<dbReference type="InterPro" id="IPR020625">
    <property type="entry name" value="Schiff_base-form_aldolases_AS"/>
</dbReference>
<dbReference type="NCBIfam" id="TIGR00674">
    <property type="entry name" value="dapA"/>
    <property type="match status" value="1"/>
</dbReference>
<dbReference type="PANTHER" id="PTHR12128:SF66">
    <property type="entry name" value="4-HYDROXY-2-OXOGLUTARATE ALDOLASE, MITOCHONDRIAL"/>
    <property type="match status" value="1"/>
</dbReference>
<dbReference type="PANTHER" id="PTHR12128">
    <property type="entry name" value="DIHYDRODIPICOLINATE SYNTHASE"/>
    <property type="match status" value="1"/>
</dbReference>
<dbReference type="Pfam" id="PF00701">
    <property type="entry name" value="DHDPS"/>
    <property type="match status" value="1"/>
</dbReference>
<dbReference type="PIRSF" id="PIRSF001365">
    <property type="entry name" value="DHDPS"/>
    <property type="match status" value="1"/>
</dbReference>
<dbReference type="PRINTS" id="PR00146">
    <property type="entry name" value="DHPICSNTHASE"/>
</dbReference>
<dbReference type="SMART" id="SM01130">
    <property type="entry name" value="DHDPS"/>
    <property type="match status" value="1"/>
</dbReference>
<dbReference type="SUPFAM" id="SSF51569">
    <property type="entry name" value="Aldolase"/>
    <property type="match status" value="1"/>
</dbReference>
<dbReference type="PROSITE" id="PS00666">
    <property type="entry name" value="DHDPS_2"/>
    <property type="match status" value="1"/>
</dbReference>
<comment type="function">
    <text evidence="1">Catalyzes the condensation of (S)-aspartate-beta-semialdehyde [(S)-ASA] and pyruvate to 4-hydroxy-tetrahydrodipicolinate (HTPA).</text>
</comment>
<comment type="catalytic activity">
    <reaction evidence="1">
        <text>L-aspartate 4-semialdehyde + pyruvate = (2S,4S)-4-hydroxy-2,3,4,5-tetrahydrodipicolinate + H2O + H(+)</text>
        <dbReference type="Rhea" id="RHEA:34171"/>
        <dbReference type="ChEBI" id="CHEBI:15361"/>
        <dbReference type="ChEBI" id="CHEBI:15377"/>
        <dbReference type="ChEBI" id="CHEBI:15378"/>
        <dbReference type="ChEBI" id="CHEBI:67139"/>
        <dbReference type="ChEBI" id="CHEBI:537519"/>
        <dbReference type="EC" id="4.3.3.7"/>
    </reaction>
</comment>
<comment type="pathway">
    <text evidence="1">Amino-acid biosynthesis; L-lysine biosynthesis via DAP pathway; (S)-tetrahydrodipicolinate from L-aspartate: step 3/4.</text>
</comment>
<comment type="subunit">
    <text evidence="1">Homotetramer; dimer of dimers.</text>
</comment>
<comment type="subcellular location">
    <subcellularLocation>
        <location evidence="1">Cytoplasm</location>
    </subcellularLocation>
</comment>
<comment type="similarity">
    <text evidence="1">Belongs to the DapA family.</text>
</comment>
<comment type="caution">
    <text evidence="2">Was originally thought to be a dihydrodipicolinate synthase (DHDPS), catalyzing the condensation of (S)-aspartate-beta-semialdehyde [(S)-ASA] and pyruvate to dihydrodipicolinate (DHDP). However, it was shown in E.coli that the product of the enzymatic reaction is not dihydrodipicolinate but in fact (4S)-4-hydroxy-2,3,4,5-tetrahydro-(2S)-dipicolinic acid (HTPA), and that the consecutive dehydration reaction leading to DHDP is not spontaneous but catalyzed by DapB.</text>
</comment>